<feature type="chain" id="PRO_0000293531" description="Potassium/proton antiporter CemA">
    <location>
        <begin position="1"/>
        <end position="229"/>
    </location>
</feature>
<feature type="transmembrane region" description="Helical" evidence="1">
    <location>
        <begin position="7"/>
        <end position="27"/>
    </location>
</feature>
<feature type="transmembrane region" description="Helical" evidence="1">
    <location>
        <begin position="107"/>
        <end position="127"/>
    </location>
</feature>
<feature type="transmembrane region" description="Helical" evidence="1">
    <location>
        <begin position="154"/>
        <end position="174"/>
    </location>
</feature>
<feature type="transmembrane region" description="Helical" evidence="1">
    <location>
        <begin position="189"/>
        <end position="209"/>
    </location>
</feature>
<dbReference type="EMBL" id="DQ069364">
    <property type="protein sequence ID" value="AAZ03808.1"/>
    <property type="molecule type" value="Genomic_DNA"/>
</dbReference>
<dbReference type="EMBL" id="DQ359689">
    <property type="protein sequence ID" value="ABC70768.1"/>
    <property type="molecule type" value="Genomic_DNA"/>
</dbReference>
<dbReference type="RefSeq" id="YP_001004198.1">
    <property type="nucleotide sequence ID" value="NC_008796.1"/>
</dbReference>
<dbReference type="SMR" id="Q4FGG7"/>
<dbReference type="GeneID" id="4712142"/>
<dbReference type="GO" id="GO:0009706">
    <property type="term" value="C:chloroplast inner membrane"/>
    <property type="evidence" value="ECO:0007669"/>
    <property type="project" value="UniProtKB-SubCell"/>
</dbReference>
<dbReference type="GO" id="GO:0015297">
    <property type="term" value="F:antiporter activity"/>
    <property type="evidence" value="ECO:0007669"/>
    <property type="project" value="UniProtKB-KW"/>
</dbReference>
<dbReference type="GO" id="GO:0015078">
    <property type="term" value="F:proton transmembrane transporter activity"/>
    <property type="evidence" value="ECO:0007669"/>
    <property type="project" value="UniProtKB-UniRule"/>
</dbReference>
<dbReference type="GO" id="GO:0006813">
    <property type="term" value="P:potassium ion transport"/>
    <property type="evidence" value="ECO:0007669"/>
    <property type="project" value="UniProtKB-UniRule"/>
</dbReference>
<dbReference type="HAMAP" id="MF_01308">
    <property type="entry name" value="CemA_PxcA"/>
    <property type="match status" value="1"/>
</dbReference>
<dbReference type="InterPro" id="IPR004282">
    <property type="entry name" value="CemA"/>
</dbReference>
<dbReference type="PANTHER" id="PTHR33650:SF2">
    <property type="entry name" value="CHLOROPLAST ENVELOPE MEMBRANE PROTEIN"/>
    <property type="match status" value="1"/>
</dbReference>
<dbReference type="PANTHER" id="PTHR33650">
    <property type="entry name" value="CHLOROPLAST ENVELOPE MEMBRANE PROTEIN-RELATED"/>
    <property type="match status" value="1"/>
</dbReference>
<dbReference type="Pfam" id="PF03040">
    <property type="entry name" value="CemA"/>
    <property type="match status" value="1"/>
</dbReference>
<gene>
    <name evidence="1" type="primary">cemA</name>
</gene>
<evidence type="ECO:0000255" key="1">
    <source>
        <dbReference type="HAMAP-Rule" id="MF_01308"/>
    </source>
</evidence>
<evidence type="ECO:0000305" key="2"/>
<sequence length="229" mass="26757">MQKKKAFNPLLYLTSIVFLSWSISFSFKKSMESLVIHWWNAEQSEVFLNDIQEKSALEKFIELEELLFLDEMIKESPDIHIQKLRIGIHKETIQLVKMYNEGHIHTILNFLTNIISFAILSVFYILGNEQLVILNSWVREFIYNLSDTIKAFCILLLTDLCIGFHSPHGWELMIGSVYKDFGFSHNNQIISGLVSTFPVILDTIFKYLIFRYLNRVSPSLVVIYHSIND</sequence>
<accession>Q4FGG7</accession>
<keyword id="KW-0050">Antiport</keyword>
<keyword id="KW-0150">Chloroplast</keyword>
<keyword id="KW-0375">Hydrogen ion transport</keyword>
<keyword id="KW-0406">Ion transport</keyword>
<keyword id="KW-0472">Membrane</keyword>
<keyword id="KW-0934">Plastid</keyword>
<keyword id="KW-1001">Plastid inner membrane</keyword>
<keyword id="KW-0630">Potassium</keyword>
<keyword id="KW-0633">Potassium transport</keyword>
<keyword id="KW-0812">Transmembrane</keyword>
<keyword id="KW-1133">Transmembrane helix</keyword>
<keyword id="KW-0813">Transport</keyword>
<protein>
    <recommendedName>
        <fullName evidence="1">Potassium/proton antiporter CemA</fullName>
    </recommendedName>
    <alternativeName>
        <fullName evidence="1">Chloroplast envelope membrane protein A</fullName>
        <shortName evidence="1">CemA</shortName>
    </alternativeName>
</protein>
<reference key="1">
    <citation type="journal article" date="2005" name="Mol. Biol. Evol.">
        <title>Identifying the basal angiosperm node in chloroplast genome phylogenies: sampling one's way out of the Felsenstein zone.</title>
        <authorList>
            <person name="Leebens-Mack J."/>
            <person name="Raubeson L.A."/>
            <person name="Cui L."/>
            <person name="Kuehl J.V."/>
            <person name="Fourcade M.H."/>
            <person name="Chumley T.W."/>
            <person name="Boore J.L."/>
            <person name="Jansen R.K."/>
            <person name="dePamphilis C.W."/>
        </authorList>
    </citation>
    <scope>NUCLEOTIDE SEQUENCE [GENOMIC DNA]</scope>
</reference>
<reference key="2">
    <citation type="journal article" date="2007" name="BMC Genomics">
        <title>Comparative chloroplast genomics: analyses including new sequences from the angiosperms Nuphar advena and Ranunculus macranthus.</title>
        <authorList>
            <person name="Raubeson L.A."/>
            <person name="Peery R."/>
            <person name="Chumley T.W."/>
            <person name="Dziubek C."/>
            <person name="Fourcade H.M."/>
            <person name="Boore J.L."/>
            <person name="Jansen R.K."/>
        </authorList>
    </citation>
    <scope>NUCLEOTIDE SEQUENCE [LARGE SCALE GENOMIC DNA]</scope>
</reference>
<proteinExistence type="inferred from homology"/>
<geneLocation type="chloroplast"/>
<organism>
    <name type="scientific">Ranunculus macranthus</name>
    <name type="common">Large buttercup</name>
    <dbReference type="NCBI Taxonomy" id="334596"/>
    <lineage>
        <taxon>Eukaryota</taxon>
        <taxon>Viridiplantae</taxon>
        <taxon>Streptophyta</taxon>
        <taxon>Embryophyta</taxon>
        <taxon>Tracheophyta</taxon>
        <taxon>Spermatophyta</taxon>
        <taxon>Magnoliopsida</taxon>
        <taxon>Ranunculales</taxon>
        <taxon>Ranunculaceae</taxon>
        <taxon>Ranunculoideae</taxon>
        <taxon>Ranunculeae</taxon>
        <taxon>Ranunculus</taxon>
    </lineage>
</organism>
<name>CEMA_RANMC</name>
<comment type="function">
    <text evidence="1">Contributes to K(+)/H(+) antiport activity by supporting proton efflux to control proton extrusion and homeostasis in chloroplasts in a light-dependent manner to modulate photosynthesis. Prevents excessive induction of non-photochemical quenching (NPQ) under continuous-light conditions. Indirectly promotes efficient inorganic carbon uptake into chloroplasts.</text>
</comment>
<comment type="catalytic activity">
    <reaction evidence="1">
        <text>K(+)(in) + H(+)(out) = K(+)(out) + H(+)(in)</text>
        <dbReference type="Rhea" id="RHEA:29467"/>
        <dbReference type="ChEBI" id="CHEBI:15378"/>
        <dbReference type="ChEBI" id="CHEBI:29103"/>
    </reaction>
</comment>
<comment type="subcellular location">
    <subcellularLocation>
        <location evidence="1">Plastid</location>
        <location evidence="1">Chloroplast inner membrane</location>
        <topology evidence="1">Multi-pass membrane protein</topology>
    </subcellularLocation>
</comment>
<comment type="similarity">
    <text evidence="1 2">Belongs to the CemA family.</text>
</comment>